<dbReference type="EC" id="6.3.4.5" evidence="1"/>
<dbReference type="EMBL" id="AP009384">
    <property type="protein sequence ID" value="BAF86743.1"/>
    <property type="molecule type" value="Genomic_DNA"/>
</dbReference>
<dbReference type="RefSeq" id="WP_012169276.1">
    <property type="nucleotide sequence ID" value="NC_009937.1"/>
</dbReference>
<dbReference type="SMR" id="A8IQ54"/>
<dbReference type="STRING" id="438753.AZC_0745"/>
<dbReference type="KEGG" id="azc:AZC_0745"/>
<dbReference type="eggNOG" id="COG0137">
    <property type="taxonomic scope" value="Bacteria"/>
</dbReference>
<dbReference type="HOGENOM" id="CLU_032784_4_2_5"/>
<dbReference type="UniPathway" id="UPA00068">
    <property type="reaction ID" value="UER00113"/>
</dbReference>
<dbReference type="Proteomes" id="UP000000270">
    <property type="component" value="Chromosome"/>
</dbReference>
<dbReference type="GO" id="GO:0005737">
    <property type="term" value="C:cytoplasm"/>
    <property type="evidence" value="ECO:0007669"/>
    <property type="project" value="UniProtKB-SubCell"/>
</dbReference>
<dbReference type="GO" id="GO:0004055">
    <property type="term" value="F:argininosuccinate synthase activity"/>
    <property type="evidence" value="ECO:0007669"/>
    <property type="project" value="UniProtKB-UniRule"/>
</dbReference>
<dbReference type="GO" id="GO:0005524">
    <property type="term" value="F:ATP binding"/>
    <property type="evidence" value="ECO:0007669"/>
    <property type="project" value="UniProtKB-UniRule"/>
</dbReference>
<dbReference type="GO" id="GO:0000053">
    <property type="term" value="P:argininosuccinate metabolic process"/>
    <property type="evidence" value="ECO:0007669"/>
    <property type="project" value="TreeGrafter"/>
</dbReference>
<dbReference type="GO" id="GO:0006526">
    <property type="term" value="P:L-arginine biosynthetic process"/>
    <property type="evidence" value="ECO:0007669"/>
    <property type="project" value="UniProtKB-UniRule"/>
</dbReference>
<dbReference type="GO" id="GO:0000050">
    <property type="term" value="P:urea cycle"/>
    <property type="evidence" value="ECO:0007669"/>
    <property type="project" value="TreeGrafter"/>
</dbReference>
<dbReference type="CDD" id="cd01999">
    <property type="entry name" value="ASS"/>
    <property type="match status" value="1"/>
</dbReference>
<dbReference type="FunFam" id="3.40.50.620:FF:000019">
    <property type="entry name" value="Argininosuccinate synthase"/>
    <property type="match status" value="1"/>
</dbReference>
<dbReference type="FunFam" id="3.90.1260.10:FF:000007">
    <property type="entry name" value="Argininosuccinate synthase"/>
    <property type="match status" value="1"/>
</dbReference>
<dbReference type="Gene3D" id="3.90.1260.10">
    <property type="entry name" value="Argininosuccinate synthetase, chain A, domain 2"/>
    <property type="match status" value="1"/>
</dbReference>
<dbReference type="Gene3D" id="3.40.50.620">
    <property type="entry name" value="HUPs"/>
    <property type="match status" value="1"/>
</dbReference>
<dbReference type="Gene3D" id="1.20.5.470">
    <property type="entry name" value="Single helix bin"/>
    <property type="match status" value="1"/>
</dbReference>
<dbReference type="HAMAP" id="MF_00005">
    <property type="entry name" value="Arg_succ_synth_type1"/>
    <property type="match status" value="1"/>
</dbReference>
<dbReference type="InterPro" id="IPR048268">
    <property type="entry name" value="Arginosuc_syn_C"/>
</dbReference>
<dbReference type="InterPro" id="IPR048267">
    <property type="entry name" value="Arginosuc_syn_N"/>
</dbReference>
<dbReference type="InterPro" id="IPR001518">
    <property type="entry name" value="Arginosuc_synth"/>
</dbReference>
<dbReference type="InterPro" id="IPR018223">
    <property type="entry name" value="Arginosuc_synth_CS"/>
</dbReference>
<dbReference type="InterPro" id="IPR023434">
    <property type="entry name" value="Arginosuc_synth_type_1_subfam"/>
</dbReference>
<dbReference type="InterPro" id="IPR024074">
    <property type="entry name" value="AS_cat/multimer_dom_body"/>
</dbReference>
<dbReference type="InterPro" id="IPR014729">
    <property type="entry name" value="Rossmann-like_a/b/a_fold"/>
</dbReference>
<dbReference type="NCBIfam" id="TIGR00032">
    <property type="entry name" value="argG"/>
    <property type="match status" value="1"/>
</dbReference>
<dbReference type="NCBIfam" id="NF001770">
    <property type="entry name" value="PRK00509.1"/>
    <property type="match status" value="1"/>
</dbReference>
<dbReference type="PANTHER" id="PTHR11587">
    <property type="entry name" value="ARGININOSUCCINATE SYNTHASE"/>
    <property type="match status" value="1"/>
</dbReference>
<dbReference type="PANTHER" id="PTHR11587:SF2">
    <property type="entry name" value="ARGININOSUCCINATE SYNTHASE"/>
    <property type="match status" value="1"/>
</dbReference>
<dbReference type="Pfam" id="PF20979">
    <property type="entry name" value="Arginosuc_syn_C"/>
    <property type="match status" value="1"/>
</dbReference>
<dbReference type="Pfam" id="PF00764">
    <property type="entry name" value="Arginosuc_synth"/>
    <property type="match status" value="1"/>
</dbReference>
<dbReference type="SUPFAM" id="SSF52402">
    <property type="entry name" value="Adenine nucleotide alpha hydrolases-like"/>
    <property type="match status" value="1"/>
</dbReference>
<dbReference type="SUPFAM" id="SSF69864">
    <property type="entry name" value="Argininosuccinate synthetase, C-terminal domain"/>
    <property type="match status" value="1"/>
</dbReference>
<dbReference type="PROSITE" id="PS00564">
    <property type="entry name" value="ARGININOSUCCIN_SYN_1"/>
    <property type="match status" value="1"/>
</dbReference>
<dbReference type="PROSITE" id="PS00565">
    <property type="entry name" value="ARGININOSUCCIN_SYN_2"/>
    <property type="match status" value="1"/>
</dbReference>
<reference key="1">
    <citation type="submission" date="2007-04" db="EMBL/GenBank/DDBJ databases">
        <title>Complete genome sequence of the nitrogen-fixing bacterium Azorhizobium caulinodans ORS571.</title>
        <authorList>
            <person name="Lee K.B."/>
            <person name="Backer P.D."/>
            <person name="Aono T."/>
            <person name="Liu C.T."/>
            <person name="Suzuki S."/>
            <person name="Suzuki T."/>
            <person name="Kaneko T."/>
            <person name="Yamada M."/>
            <person name="Tabata S."/>
            <person name="Kupfer D.M."/>
            <person name="Najar F.Z."/>
            <person name="Wiley G.B."/>
            <person name="Roe B."/>
            <person name="Binnewies T."/>
            <person name="Ussery D."/>
            <person name="Vereecke D."/>
            <person name="Gevers D."/>
            <person name="Holsters M."/>
            <person name="Oyaizu H."/>
        </authorList>
    </citation>
    <scope>NUCLEOTIDE SEQUENCE [LARGE SCALE GENOMIC DNA]</scope>
    <source>
        <strain>ATCC 43989 / DSM 5975 / JCM 20966 / LMG 6465 / NBRC 14845 / NCIMB 13405 / ORS 571</strain>
    </source>
</reference>
<gene>
    <name evidence="1" type="primary">argG</name>
    <name type="ordered locus">AZC_0745</name>
</gene>
<comment type="catalytic activity">
    <reaction evidence="1">
        <text>L-citrulline + L-aspartate + ATP = 2-(N(omega)-L-arginino)succinate + AMP + diphosphate + H(+)</text>
        <dbReference type="Rhea" id="RHEA:10932"/>
        <dbReference type="ChEBI" id="CHEBI:15378"/>
        <dbReference type="ChEBI" id="CHEBI:29991"/>
        <dbReference type="ChEBI" id="CHEBI:30616"/>
        <dbReference type="ChEBI" id="CHEBI:33019"/>
        <dbReference type="ChEBI" id="CHEBI:57472"/>
        <dbReference type="ChEBI" id="CHEBI:57743"/>
        <dbReference type="ChEBI" id="CHEBI:456215"/>
        <dbReference type="EC" id="6.3.4.5"/>
    </reaction>
</comment>
<comment type="pathway">
    <text evidence="1">Amino-acid biosynthesis; L-arginine biosynthesis; L-arginine from L-ornithine and carbamoyl phosphate: step 2/3.</text>
</comment>
<comment type="subunit">
    <text evidence="1">Homotetramer.</text>
</comment>
<comment type="subcellular location">
    <subcellularLocation>
        <location evidence="1">Cytoplasm</location>
    </subcellularLocation>
</comment>
<comment type="similarity">
    <text evidence="1">Belongs to the argininosuccinate synthase family. Type 1 subfamily.</text>
</comment>
<name>ASSY_AZOC5</name>
<keyword id="KW-0028">Amino-acid biosynthesis</keyword>
<keyword id="KW-0055">Arginine biosynthesis</keyword>
<keyword id="KW-0067">ATP-binding</keyword>
<keyword id="KW-0963">Cytoplasm</keyword>
<keyword id="KW-0436">Ligase</keyword>
<keyword id="KW-0547">Nucleotide-binding</keyword>
<keyword id="KW-1185">Reference proteome</keyword>
<protein>
    <recommendedName>
        <fullName evidence="1">Argininosuccinate synthase</fullName>
        <ecNumber evidence="1">6.3.4.5</ecNumber>
    </recommendedName>
    <alternativeName>
        <fullName evidence="1">Citrulline--aspartate ligase</fullName>
    </alternativeName>
</protein>
<evidence type="ECO:0000255" key="1">
    <source>
        <dbReference type="HAMAP-Rule" id="MF_00005"/>
    </source>
</evidence>
<sequence>MSRDVKKVVLAYSGGLDTSVILKWLQTTYRCEVVTFTADLGQGEELEPARKKAELLGIKPENIFIEDVREEFVRDYVFPMFRANAVYEGQYLLGTSIARPLIAKKQIEIARKVGADAVSHGATGKGNDQVRFELGYYALEPEITVIAPWREWDLTSRTKLLEFAETHQIPIAKDKRGEAPFSVDANLLHSSSEGKVLEDPAEDAPEYVYQRTISPEAAPDVATVITIGFEKGDAVSINGEALSPATLLAKLNELGKANGIGRLDLVENRFVGMKSRGVYETPGGTILLAAHRGIESITLDRGAAHLKDELMPRYAELIYNGFWFSPEREMLQAAIDHSQAYVTGEVTVKLYKGNATVIGRKSPYSLYNQELVTFEEGAVAYDHRDAAGFIKLNALRLRTTAARARKAQ</sequence>
<proteinExistence type="inferred from homology"/>
<feature type="chain" id="PRO_0000321301" description="Argininosuccinate synthase">
    <location>
        <begin position="1"/>
        <end position="408"/>
    </location>
</feature>
<feature type="binding site" evidence="1">
    <location>
        <begin position="11"/>
        <end position="19"/>
    </location>
    <ligand>
        <name>ATP</name>
        <dbReference type="ChEBI" id="CHEBI:30616"/>
    </ligand>
</feature>
<feature type="binding site" evidence="1">
    <location>
        <position position="38"/>
    </location>
    <ligand>
        <name>ATP</name>
        <dbReference type="ChEBI" id="CHEBI:30616"/>
    </ligand>
</feature>
<feature type="binding site" evidence="1">
    <location>
        <position position="91"/>
    </location>
    <ligand>
        <name>L-citrulline</name>
        <dbReference type="ChEBI" id="CHEBI:57743"/>
    </ligand>
</feature>
<feature type="binding site" evidence="1">
    <location>
        <position position="96"/>
    </location>
    <ligand>
        <name>L-citrulline</name>
        <dbReference type="ChEBI" id="CHEBI:57743"/>
    </ligand>
</feature>
<feature type="binding site" evidence="1">
    <location>
        <position position="121"/>
    </location>
    <ligand>
        <name>ATP</name>
        <dbReference type="ChEBI" id="CHEBI:30616"/>
    </ligand>
</feature>
<feature type="binding site" evidence="1">
    <location>
        <position position="123"/>
    </location>
    <ligand>
        <name>L-aspartate</name>
        <dbReference type="ChEBI" id="CHEBI:29991"/>
    </ligand>
</feature>
<feature type="binding site" evidence="1">
    <location>
        <position position="127"/>
    </location>
    <ligand>
        <name>L-aspartate</name>
        <dbReference type="ChEBI" id="CHEBI:29991"/>
    </ligand>
</feature>
<feature type="binding site" evidence="1">
    <location>
        <position position="127"/>
    </location>
    <ligand>
        <name>L-citrulline</name>
        <dbReference type="ChEBI" id="CHEBI:57743"/>
    </ligand>
</feature>
<feature type="binding site" evidence="1">
    <location>
        <position position="128"/>
    </location>
    <ligand>
        <name>L-aspartate</name>
        <dbReference type="ChEBI" id="CHEBI:29991"/>
    </ligand>
</feature>
<feature type="binding site" evidence="1">
    <location>
        <position position="131"/>
    </location>
    <ligand>
        <name>L-citrulline</name>
        <dbReference type="ChEBI" id="CHEBI:57743"/>
    </ligand>
</feature>
<feature type="binding site" evidence="1">
    <location>
        <position position="182"/>
    </location>
    <ligand>
        <name>L-citrulline</name>
        <dbReference type="ChEBI" id="CHEBI:57743"/>
    </ligand>
</feature>
<feature type="binding site" evidence="1">
    <location>
        <position position="191"/>
    </location>
    <ligand>
        <name>L-citrulline</name>
        <dbReference type="ChEBI" id="CHEBI:57743"/>
    </ligand>
</feature>
<feature type="binding site" evidence="1">
    <location>
        <position position="267"/>
    </location>
    <ligand>
        <name>L-citrulline</name>
        <dbReference type="ChEBI" id="CHEBI:57743"/>
    </ligand>
</feature>
<feature type="binding site" evidence="1">
    <location>
        <position position="279"/>
    </location>
    <ligand>
        <name>L-citrulline</name>
        <dbReference type="ChEBI" id="CHEBI:57743"/>
    </ligand>
</feature>
<accession>A8IQ54</accession>
<organism>
    <name type="scientific">Azorhizobium caulinodans (strain ATCC 43989 / DSM 5975 / JCM 20966 / LMG 6465 / NBRC 14845 / NCIMB 13405 / ORS 571)</name>
    <dbReference type="NCBI Taxonomy" id="438753"/>
    <lineage>
        <taxon>Bacteria</taxon>
        <taxon>Pseudomonadati</taxon>
        <taxon>Pseudomonadota</taxon>
        <taxon>Alphaproteobacteria</taxon>
        <taxon>Hyphomicrobiales</taxon>
        <taxon>Xanthobacteraceae</taxon>
        <taxon>Azorhizobium</taxon>
    </lineage>
</organism>